<dbReference type="EC" id="3.1.3.77" evidence="1"/>
<dbReference type="EMBL" id="BT045200">
    <property type="protein sequence ID" value="ACI33462.1"/>
    <property type="molecule type" value="mRNA"/>
</dbReference>
<dbReference type="RefSeq" id="NP_001133552.1">
    <property type="nucleotide sequence ID" value="NM_001140080.1"/>
</dbReference>
<dbReference type="SMR" id="B5X2D1"/>
<dbReference type="STRING" id="8030.ENSSSAP00000112332"/>
<dbReference type="PaxDb" id="8030-ENSSSAP00000112332"/>
<dbReference type="Ensembl" id="ENSSSAT00020184409">
    <property type="protein sequence ID" value="ENSSSAP00020139918"/>
    <property type="gene ID" value="ENSSSAG00020077547"/>
</dbReference>
<dbReference type="Ensembl" id="ENSSSAT00070063704">
    <property type="protein sequence ID" value="ENSSSAP00070061086"/>
    <property type="gene ID" value="ENSSSAG00070039617"/>
</dbReference>
<dbReference type="Ensembl" id="ENSSSAT00075113152">
    <property type="protein sequence ID" value="ENSSSAP00075083703"/>
    <property type="gene ID" value="ENSSSAG00075053809"/>
</dbReference>
<dbReference type="GeneID" id="100195051"/>
<dbReference type="KEGG" id="sasa:100195051"/>
<dbReference type="CTD" id="40630"/>
<dbReference type="OMA" id="LQGMVWE"/>
<dbReference type="OrthoDB" id="280781at7898"/>
<dbReference type="UniPathway" id="UPA00904">
    <property type="reaction ID" value="UER00876"/>
</dbReference>
<dbReference type="UniPathway" id="UPA00904">
    <property type="reaction ID" value="UER00877"/>
</dbReference>
<dbReference type="Proteomes" id="UP000087266">
    <property type="component" value="Chromosome ssa01"/>
</dbReference>
<dbReference type="Bgee" id="ENSSSAG00000078724">
    <property type="expression patterns" value="Expressed in testis and 24 other cell types or tissues"/>
</dbReference>
<dbReference type="GO" id="GO:0005737">
    <property type="term" value="C:cytoplasm"/>
    <property type="evidence" value="ECO:0007669"/>
    <property type="project" value="UniProtKB-SubCell"/>
</dbReference>
<dbReference type="GO" id="GO:0005634">
    <property type="term" value="C:nucleus"/>
    <property type="evidence" value="ECO:0007669"/>
    <property type="project" value="UniProtKB-SubCell"/>
</dbReference>
<dbReference type="GO" id="GO:0043874">
    <property type="term" value="F:acireductone synthase activity"/>
    <property type="evidence" value="ECO:0007669"/>
    <property type="project" value="UniProtKB-EC"/>
</dbReference>
<dbReference type="GO" id="GO:0000287">
    <property type="term" value="F:magnesium ion binding"/>
    <property type="evidence" value="ECO:0007669"/>
    <property type="project" value="UniProtKB-UniRule"/>
</dbReference>
<dbReference type="GO" id="GO:0019509">
    <property type="term" value="P:L-methionine salvage from methylthioadenosine"/>
    <property type="evidence" value="ECO:0007669"/>
    <property type="project" value="UniProtKB-UniRule"/>
</dbReference>
<dbReference type="CDD" id="cd01629">
    <property type="entry name" value="HAD_EP"/>
    <property type="match status" value="1"/>
</dbReference>
<dbReference type="FunFam" id="1.10.720.60:FF:000004">
    <property type="entry name" value="Enolase-phosphatase E1"/>
    <property type="match status" value="1"/>
</dbReference>
<dbReference type="FunFam" id="3.40.50.1000:FF:000102">
    <property type="entry name" value="Enolase-phosphatase E1"/>
    <property type="match status" value="1"/>
</dbReference>
<dbReference type="Gene3D" id="1.10.720.60">
    <property type="match status" value="1"/>
</dbReference>
<dbReference type="Gene3D" id="3.40.50.1000">
    <property type="entry name" value="HAD superfamily/HAD-like"/>
    <property type="match status" value="1"/>
</dbReference>
<dbReference type="HAMAP" id="MF_01681">
    <property type="entry name" value="Salvage_MtnC"/>
    <property type="match status" value="1"/>
</dbReference>
<dbReference type="HAMAP" id="MF_03117">
    <property type="entry name" value="Salvage_MtnC_euk"/>
    <property type="match status" value="1"/>
</dbReference>
<dbReference type="InterPro" id="IPR023943">
    <property type="entry name" value="Enolase-ppase_E1"/>
</dbReference>
<dbReference type="InterPro" id="IPR027511">
    <property type="entry name" value="ENOPH1_eukaryotes"/>
</dbReference>
<dbReference type="InterPro" id="IPR036412">
    <property type="entry name" value="HAD-like_sf"/>
</dbReference>
<dbReference type="InterPro" id="IPR006439">
    <property type="entry name" value="HAD-SF_hydro_IA"/>
</dbReference>
<dbReference type="InterPro" id="IPR023214">
    <property type="entry name" value="HAD_sf"/>
</dbReference>
<dbReference type="NCBIfam" id="TIGR01691">
    <property type="entry name" value="enolase-ppase"/>
    <property type="match status" value="1"/>
</dbReference>
<dbReference type="NCBIfam" id="TIGR01549">
    <property type="entry name" value="HAD-SF-IA-v1"/>
    <property type="match status" value="1"/>
</dbReference>
<dbReference type="PANTHER" id="PTHR20371">
    <property type="entry name" value="ENOLASE-PHOSPHATASE E1"/>
    <property type="match status" value="1"/>
</dbReference>
<dbReference type="PANTHER" id="PTHR20371:SF1">
    <property type="entry name" value="ENOLASE-PHOSPHATASE E1"/>
    <property type="match status" value="1"/>
</dbReference>
<dbReference type="Pfam" id="PF00702">
    <property type="entry name" value="Hydrolase"/>
    <property type="match status" value="1"/>
</dbReference>
<dbReference type="SFLD" id="SFLDG01133">
    <property type="entry name" value="C1.5.4:_Enolase-phosphatase_Li"/>
    <property type="match status" value="1"/>
</dbReference>
<dbReference type="SFLD" id="SFLDF00044">
    <property type="entry name" value="enolase-phosphatase"/>
    <property type="match status" value="1"/>
</dbReference>
<dbReference type="SUPFAM" id="SSF56784">
    <property type="entry name" value="HAD-like"/>
    <property type="match status" value="1"/>
</dbReference>
<name>ENOPH_SALSA</name>
<protein>
    <recommendedName>
        <fullName evidence="1">Enolase-phosphatase E1</fullName>
        <ecNumber evidence="1">3.1.3.77</ecNumber>
    </recommendedName>
    <alternativeName>
        <fullName evidence="1">2,3-diketo-5-methylthio-1-phosphopentane phosphatase</fullName>
    </alternativeName>
    <alternativeName>
        <fullName evidence="1">MASA homolog</fullName>
    </alternativeName>
</protein>
<organism>
    <name type="scientific">Salmo salar</name>
    <name type="common">Atlantic salmon</name>
    <dbReference type="NCBI Taxonomy" id="8030"/>
    <lineage>
        <taxon>Eukaryota</taxon>
        <taxon>Metazoa</taxon>
        <taxon>Chordata</taxon>
        <taxon>Craniata</taxon>
        <taxon>Vertebrata</taxon>
        <taxon>Euteleostomi</taxon>
        <taxon>Actinopterygii</taxon>
        <taxon>Neopterygii</taxon>
        <taxon>Teleostei</taxon>
        <taxon>Protacanthopterygii</taxon>
        <taxon>Salmoniformes</taxon>
        <taxon>Salmonidae</taxon>
        <taxon>Salmoninae</taxon>
        <taxon>Salmo</taxon>
    </lineage>
</organism>
<reference key="1">
    <citation type="journal article" date="2010" name="BMC Genomics">
        <title>Salmo salar and Esox lucius full-length cDNA sequences reveal changes in evolutionary pressures on a post-tetraploidization genome.</title>
        <authorList>
            <person name="Leong J.S."/>
            <person name="Jantzen S.G."/>
            <person name="von Schalburg K.R."/>
            <person name="Cooper G.A."/>
            <person name="Messmer A.M."/>
            <person name="Liao N.Y."/>
            <person name="Munro S."/>
            <person name="Moore R."/>
            <person name="Holt R.A."/>
            <person name="Jones S.J."/>
            <person name="Davidson W.S."/>
            <person name="Koop B.F."/>
        </authorList>
    </citation>
    <scope>NUCLEOTIDE SEQUENCE [LARGE SCALE MRNA]</scope>
    <source>
        <tissue>Brain</tissue>
    </source>
</reference>
<keyword id="KW-0028">Amino-acid biosynthesis</keyword>
<keyword id="KW-0963">Cytoplasm</keyword>
<keyword id="KW-0378">Hydrolase</keyword>
<keyword id="KW-0460">Magnesium</keyword>
<keyword id="KW-0479">Metal-binding</keyword>
<keyword id="KW-0486">Methionine biosynthesis</keyword>
<keyword id="KW-0539">Nucleus</keyword>
<keyword id="KW-1185">Reference proteome</keyword>
<evidence type="ECO:0000255" key="1">
    <source>
        <dbReference type="HAMAP-Rule" id="MF_03117"/>
    </source>
</evidence>
<gene>
    <name type="primary">enoph1</name>
    <name type="synonym">masa</name>
</gene>
<comment type="function">
    <text evidence="1">Bifunctional enzyme that catalyzes the enolization of 2,3-diketo-5-methylthiopentyl-1-phosphate (DK-MTP-1-P) into the intermediate 2-hydroxy-3-keto-5-methylthiopentenyl-1-phosphate (HK-MTPenyl-1-P), which is then dephosphorylated to form the acireductone 1,2-dihydroxy-3-keto-5-methylthiopentene (DHK-MTPene).</text>
</comment>
<comment type="catalytic activity">
    <reaction evidence="1">
        <text>5-methylsulfanyl-2,3-dioxopentyl phosphate + H2O = 1,2-dihydroxy-5-(methylsulfanyl)pent-1-en-3-one + phosphate</text>
        <dbReference type="Rhea" id="RHEA:21700"/>
        <dbReference type="ChEBI" id="CHEBI:15377"/>
        <dbReference type="ChEBI" id="CHEBI:43474"/>
        <dbReference type="ChEBI" id="CHEBI:49252"/>
        <dbReference type="ChEBI" id="CHEBI:58828"/>
        <dbReference type="EC" id="3.1.3.77"/>
    </reaction>
</comment>
<comment type="cofactor">
    <cofactor evidence="1">
        <name>Mg(2+)</name>
        <dbReference type="ChEBI" id="CHEBI:18420"/>
    </cofactor>
    <text evidence="1">Binds 1 Mg(2+) ion per subunit.</text>
</comment>
<comment type="pathway">
    <text evidence="1">Amino-acid biosynthesis; L-methionine biosynthesis via salvage pathway; L-methionine from S-methyl-5-thio-alpha-D-ribose 1-phosphate: step 3/6.</text>
</comment>
<comment type="pathway">
    <text evidence="1">Amino-acid biosynthesis; L-methionine biosynthesis via salvage pathway; L-methionine from S-methyl-5-thio-alpha-D-ribose 1-phosphate: step 4/6.</text>
</comment>
<comment type="subunit">
    <text evidence="1">Monomer.</text>
</comment>
<comment type="subcellular location">
    <subcellularLocation>
        <location evidence="1">Cytoplasm</location>
    </subcellularLocation>
    <subcellularLocation>
        <location evidence="1">Nucleus</location>
    </subcellularLocation>
</comment>
<comment type="similarity">
    <text evidence="1">Belongs to the HAD-like hydrolase superfamily. MasA/MtnC family.</text>
</comment>
<accession>B5X2D1</accession>
<proteinExistence type="evidence at transcript level"/>
<feature type="chain" id="PRO_0000393969" description="Enolase-phosphatase E1">
    <location>
        <begin position="1"/>
        <end position="261"/>
    </location>
</feature>
<feature type="binding site" evidence="1">
    <location>
        <position position="16"/>
    </location>
    <ligand>
        <name>Mg(2+)</name>
        <dbReference type="ChEBI" id="CHEBI:18420"/>
    </ligand>
</feature>
<feature type="binding site" evidence="1">
    <location>
        <position position="18"/>
    </location>
    <ligand>
        <name>Mg(2+)</name>
        <dbReference type="ChEBI" id="CHEBI:18420"/>
    </ligand>
</feature>
<feature type="binding site" evidence="1">
    <location>
        <begin position="153"/>
        <end position="154"/>
    </location>
    <ligand>
        <name>substrate</name>
    </ligand>
</feature>
<feature type="binding site" evidence="1">
    <location>
        <position position="187"/>
    </location>
    <ligand>
        <name>substrate</name>
    </ligand>
</feature>
<feature type="binding site" evidence="1">
    <location>
        <position position="212"/>
    </location>
    <ligand>
        <name>Mg(2+)</name>
        <dbReference type="ChEBI" id="CHEBI:18420"/>
    </ligand>
</feature>
<sequence length="261" mass="29599">MATVSIPANTTALLLDIEGTTTPITFVKDILFPYIKDHLEEHLSAHWEEDECKQDVHLLKKQVEEDLRLNRACAQHALDQSGHTDEEKAIREVVDNVLWQMASDRKTTALKQLQGHMWRAAYAAGRIKGEVYQDVVPSIRRWRRQGLKVYIYSSGSVEAQKLLFGYSVEGDVLDLFDGHFDTNIGAKVESKSYERIAERMGCLSEEIMFLTDITREAKAAEDAGVNVAVVVRPGNMELTEEERSHYNLITTFSQLEVMGRV</sequence>